<evidence type="ECO:0000250" key="1">
    <source>
        <dbReference type="UniProtKB" id="P68827"/>
    </source>
</evidence>
<evidence type="ECO:0000255" key="2"/>
<evidence type="ECO:0000255" key="3">
    <source>
        <dbReference type="PROSITE-ProRule" id="PRU00076"/>
    </source>
</evidence>
<evidence type="ECO:0000269" key="4">
    <source>
    </source>
</evidence>
<evidence type="ECO:0000269" key="5">
    <source>
    </source>
</evidence>
<evidence type="ECO:0000269" key="6">
    <source>
    </source>
</evidence>
<evidence type="ECO:0000269" key="7">
    <source>
    </source>
</evidence>
<evidence type="ECO:0000269" key="8">
    <source>
    </source>
</evidence>
<evidence type="ECO:0000303" key="9">
    <source>
    </source>
</evidence>
<evidence type="ECO:0000303" key="10">
    <source>
    </source>
</evidence>
<evidence type="ECO:0000305" key="11"/>
<evidence type="ECO:0000305" key="12">
    <source>
    </source>
</evidence>
<accession>Q9UK23</accession>
<accession>B2RAS1</accession>
<accession>Q96EJ8</accession>
<keyword id="KW-0025">Alternative splicing</keyword>
<keyword id="KW-0903">Direct protein sequencing</keyword>
<keyword id="KW-1015">Disulfide bond</keyword>
<keyword id="KW-0245">EGF-like domain</keyword>
<keyword id="KW-0325">Glycoprotein</keyword>
<keyword id="KW-0333">Golgi apparatus</keyword>
<keyword id="KW-0378">Hydrolase</keyword>
<keyword id="KW-0472">Membrane</keyword>
<keyword id="KW-1267">Proteomics identification</keyword>
<keyword id="KW-1185">Reference proteome</keyword>
<keyword id="KW-0732">Signal</keyword>
<keyword id="KW-0812">Transmembrane</keyword>
<keyword id="KW-1133">Transmembrane helix</keyword>
<keyword id="KW-0865">Zymogen</keyword>
<comment type="function">
    <text evidence="7">Catalyzes the second step in the formation of the mannose 6-phosphate targeting signal on lysosomal enzyme oligosaccharides by removing GlcNAc residues from GlcNAc-alpha-P-mannose moieties, which are formed in the first step. Also hydrolyzes UDP-GlcNAc, a sugar donor for Golgi N-acetylglucosaminyltransferases.</text>
</comment>
<comment type="catalytic activity">
    <reaction>
        <text>N(4)-[6-(N-acetyl-alpha-D-glucosaminyl-1-phospho)-alpha-D-mannosyl-(1-&gt;2)-alpha-D-mannosyl-(glycan)]-L-asparaginyl-[protein] + H2O = N(4)-[6-phospho-alpha-D-mannosyl-(1-&gt;2)-alpha-D-mannosyl-(glycan)]-L-asparaginyl-[protein] + N-acetyl-D-glucosamine + H(+)</text>
        <dbReference type="Rhea" id="RHEA:24372"/>
        <dbReference type="Rhea" id="RHEA-COMP:14508"/>
        <dbReference type="Rhea" id="RHEA-COMP:14509"/>
        <dbReference type="ChEBI" id="CHEBI:15377"/>
        <dbReference type="ChEBI" id="CHEBI:15378"/>
        <dbReference type="ChEBI" id="CHEBI:140369"/>
        <dbReference type="ChEBI" id="CHEBI:140371"/>
        <dbReference type="ChEBI" id="CHEBI:506227"/>
        <dbReference type="EC" id="3.1.4.45"/>
    </reaction>
</comment>
<comment type="pathway">
    <text>Protein modification; protein glycosylation.</text>
</comment>
<comment type="subunit">
    <text evidence="1 8">Homotetramer arranged as two disulfide-linked homodimers. Interacts with AP4M1.</text>
</comment>
<comment type="subcellular location">
    <subcellularLocation>
        <location evidence="5">Golgi apparatus</location>
        <location evidence="5">Golgi stack membrane</location>
        <topology evidence="5">Single-pass type I membrane protein</topology>
    </subcellularLocation>
    <subcellularLocation>
        <location evidence="5">Golgi apparatus</location>
        <location evidence="5">trans-Golgi network</location>
    </subcellularLocation>
    <text>Cis/medial Golgi.</text>
</comment>
<comment type="alternative products">
    <event type="alternative splicing"/>
    <isoform>
        <id>Q9UK23-1</id>
        <name>1</name>
        <sequence type="displayed"/>
    </isoform>
    <isoform>
        <id>Q9UK23-2</id>
        <name>2</name>
        <sequence type="described" ref="VSP_012269"/>
    </isoform>
    <isoform>
        <id>Q9UK23-3</id>
        <name>3</name>
        <sequence type="described" ref="VSP_012267 VSP_012268"/>
    </isoform>
</comment>
<comment type="tissue specificity">
    <text>Isoform 2 may be brain-specific.</text>
</comment>
<comment type="domain">
    <text>The tyrosine-based internalization signal may be essential for its retrieval from the plasma membrane to the TGN.</text>
</comment>
<comment type="domain">
    <text>The C-terminal NPFKD sequence is an attractive candidate for either an endocytosis signal acting at the plasma membrane or a retrieval signal acting at the TGN to return the enzyme to the cis/medial-Golgi.</text>
</comment>
<comment type="PTM">
    <text evidence="5">The precursor is cleaved and activated in the trans-Golgi network by a furin endopeptidase.</text>
</comment>
<comment type="disease">
    <text evidence="6">Defects in NAGPA have been suggested to play a role in susceptibility to persistent stuttering. Stuttering is a common speech disorder characterized by repetitions, prolongations, and interruptions in the flow of speech.</text>
</comment>
<proteinExistence type="evidence at protein level"/>
<gene>
    <name type="primary">NAGPA</name>
</gene>
<dbReference type="EC" id="3.1.4.45"/>
<dbReference type="EMBL" id="AF187072">
    <property type="protein sequence ID" value="AAF08273.1"/>
    <property type="molecule type" value="mRNA"/>
</dbReference>
<dbReference type="EMBL" id="AK127952">
    <property type="protein sequence ID" value="BAG54605.1"/>
    <property type="molecule type" value="mRNA"/>
</dbReference>
<dbReference type="EMBL" id="AK314320">
    <property type="protein sequence ID" value="BAG36968.1"/>
    <property type="molecule type" value="mRNA"/>
</dbReference>
<dbReference type="EMBL" id="AC026458">
    <property type="status" value="NOT_ANNOTATED_CDS"/>
    <property type="molecule type" value="Genomic_DNA"/>
</dbReference>
<dbReference type="EMBL" id="CH471112">
    <property type="protein sequence ID" value="EAW85245.1"/>
    <property type="molecule type" value="Genomic_DNA"/>
</dbReference>
<dbReference type="EMBL" id="BC012194">
    <property type="protein sequence ID" value="AAH12194.1"/>
    <property type="molecule type" value="mRNA"/>
</dbReference>
<dbReference type="CCDS" id="CCDS10527.1">
    <molecule id="Q9UK23-1"/>
</dbReference>
<dbReference type="RefSeq" id="NP_057340.2">
    <molecule id="Q9UK23-1"/>
    <property type="nucleotide sequence ID" value="NM_016256.4"/>
</dbReference>
<dbReference type="SMR" id="Q9UK23"/>
<dbReference type="BioGRID" id="119351">
    <property type="interactions" value="38"/>
</dbReference>
<dbReference type="FunCoup" id="Q9UK23">
    <property type="interactions" value="519"/>
</dbReference>
<dbReference type="IntAct" id="Q9UK23">
    <property type="interactions" value="21"/>
</dbReference>
<dbReference type="MINT" id="Q9UK23"/>
<dbReference type="STRING" id="9606.ENSP00000310998"/>
<dbReference type="ChEMBL" id="CHEMBL5920"/>
<dbReference type="DrugBank" id="DB00141">
    <property type="generic name" value="N-Acetylglucosamine"/>
</dbReference>
<dbReference type="GlyCosmos" id="Q9UK23">
    <property type="glycosylation" value="6 sites, No reported glycans"/>
</dbReference>
<dbReference type="GlyGen" id="Q9UK23">
    <property type="glycosylation" value="7 sites, 2 N-linked glycans (2 sites)"/>
</dbReference>
<dbReference type="iPTMnet" id="Q9UK23"/>
<dbReference type="PhosphoSitePlus" id="Q9UK23"/>
<dbReference type="BioMuta" id="NAGPA"/>
<dbReference type="DMDM" id="296439239"/>
<dbReference type="jPOST" id="Q9UK23"/>
<dbReference type="MassIVE" id="Q9UK23"/>
<dbReference type="PaxDb" id="9606-ENSP00000310998"/>
<dbReference type="PeptideAtlas" id="Q9UK23"/>
<dbReference type="ProteomicsDB" id="84708">
    <molecule id="Q9UK23-1"/>
</dbReference>
<dbReference type="ProteomicsDB" id="84709">
    <molecule id="Q9UK23-2"/>
</dbReference>
<dbReference type="ProteomicsDB" id="84710">
    <molecule id="Q9UK23-3"/>
</dbReference>
<dbReference type="Pumba" id="Q9UK23"/>
<dbReference type="Antibodypedia" id="24469">
    <property type="antibodies" value="31 antibodies from 13 providers"/>
</dbReference>
<dbReference type="DNASU" id="51172"/>
<dbReference type="Ensembl" id="ENST00000312251.8">
    <molecule id="Q9UK23-1"/>
    <property type="protein sequence ID" value="ENSP00000310998.3"/>
    <property type="gene ID" value="ENSG00000103174.13"/>
</dbReference>
<dbReference type="Ensembl" id="ENST00000381955.7">
    <molecule id="Q9UK23-2"/>
    <property type="protein sequence ID" value="ENSP00000371381.3"/>
    <property type="gene ID" value="ENSG00000103174.13"/>
</dbReference>
<dbReference type="Ensembl" id="ENST00000562746.5">
    <molecule id="Q9UK23-3"/>
    <property type="protein sequence ID" value="ENSP00000455900.1"/>
    <property type="gene ID" value="ENSG00000103174.13"/>
</dbReference>
<dbReference type="Ensembl" id="ENST00000649828.1">
    <molecule id="Q9UK23-3"/>
    <property type="protein sequence ID" value="ENSP00000498032.1"/>
    <property type="gene ID" value="ENSG00000103174.13"/>
</dbReference>
<dbReference type="GeneID" id="51172"/>
<dbReference type="KEGG" id="hsa:51172"/>
<dbReference type="MANE-Select" id="ENST00000312251.8">
    <property type="protein sequence ID" value="ENSP00000310998.3"/>
    <property type="RefSeq nucleotide sequence ID" value="NM_016256.4"/>
    <property type="RefSeq protein sequence ID" value="NP_057340.2"/>
</dbReference>
<dbReference type="UCSC" id="uc002cyg.4">
    <molecule id="Q9UK23-1"/>
    <property type="organism name" value="human"/>
</dbReference>
<dbReference type="AGR" id="HGNC:17378"/>
<dbReference type="CTD" id="51172"/>
<dbReference type="DisGeNET" id="51172"/>
<dbReference type="GeneCards" id="NAGPA"/>
<dbReference type="HGNC" id="HGNC:17378">
    <property type="gene designation" value="NAGPA"/>
</dbReference>
<dbReference type="HPA" id="ENSG00000103174">
    <property type="expression patterns" value="Low tissue specificity"/>
</dbReference>
<dbReference type="MalaCards" id="NAGPA"/>
<dbReference type="MIM" id="607985">
    <property type="type" value="gene"/>
</dbReference>
<dbReference type="neXtProt" id="NX_Q9UK23"/>
<dbReference type="OpenTargets" id="ENSG00000103174"/>
<dbReference type="PharmGKB" id="PA134940049"/>
<dbReference type="VEuPathDB" id="HostDB:ENSG00000103174"/>
<dbReference type="eggNOG" id="ENOG502QRY5">
    <property type="taxonomic scope" value="Eukaryota"/>
</dbReference>
<dbReference type="GeneTree" id="ENSGT01030000234566"/>
<dbReference type="HOGENOM" id="CLU_031673_1_0_1"/>
<dbReference type="InParanoid" id="Q9UK23"/>
<dbReference type="OMA" id="RPCKCEH"/>
<dbReference type="OrthoDB" id="192253at2759"/>
<dbReference type="PAN-GO" id="Q9UK23">
    <property type="GO annotations" value="1 GO annotation based on evolutionary models"/>
</dbReference>
<dbReference type="PhylomeDB" id="Q9UK23"/>
<dbReference type="TreeFam" id="TF331920"/>
<dbReference type="BRENDA" id="3.1.4.45">
    <property type="organism ID" value="2681"/>
</dbReference>
<dbReference type="PathwayCommons" id="Q9UK23"/>
<dbReference type="SignaLink" id="Q9UK23"/>
<dbReference type="UniPathway" id="UPA00378"/>
<dbReference type="BioGRID-ORCS" id="51172">
    <property type="hits" value="21 hits in 1156 CRISPR screens"/>
</dbReference>
<dbReference type="GeneWiki" id="NAGPA"/>
<dbReference type="GenomeRNAi" id="51172"/>
<dbReference type="Pharos" id="Q9UK23">
    <property type="development level" value="Tbio"/>
</dbReference>
<dbReference type="PRO" id="PR:Q9UK23"/>
<dbReference type="Proteomes" id="UP000005640">
    <property type="component" value="Chromosome 16"/>
</dbReference>
<dbReference type="RNAct" id="Q9UK23">
    <property type="molecule type" value="protein"/>
</dbReference>
<dbReference type="Bgee" id="ENSG00000103174">
    <property type="expression patterns" value="Expressed in middle temporal gyrus and 163 other cell types or tissues"/>
</dbReference>
<dbReference type="ExpressionAtlas" id="Q9UK23">
    <property type="expression patterns" value="baseline and differential"/>
</dbReference>
<dbReference type="GO" id="GO:0032580">
    <property type="term" value="C:Golgi cisterna membrane"/>
    <property type="evidence" value="ECO:0007669"/>
    <property type="project" value="UniProtKB-SubCell"/>
</dbReference>
<dbReference type="GO" id="GO:0016020">
    <property type="term" value="C:membrane"/>
    <property type="evidence" value="ECO:0000304"/>
    <property type="project" value="ProtInc"/>
</dbReference>
<dbReference type="GO" id="GO:0003944">
    <property type="term" value="F:N-acetylglucosamine-1-phosphodiester alpha-N-acetylglucosaminidase activity"/>
    <property type="evidence" value="ECO:0000304"/>
    <property type="project" value="ProtInc"/>
</dbReference>
<dbReference type="GO" id="GO:0005975">
    <property type="term" value="P:carbohydrate metabolic process"/>
    <property type="evidence" value="ECO:0000304"/>
    <property type="project" value="ProtInc"/>
</dbReference>
<dbReference type="GO" id="GO:0007040">
    <property type="term" value="P:lysosome organization"/>
    <property type="evidence" value="ECO:0000304"/>
    <property type="project" value="ProtInc"/>
</dbReference>
<dbReference type="GO" id="GO:0006486">
    <property type="term" value="P:protein glycosylation"/>
    <property type="evidence" value="ECO:0007669"/>
    <property type="project" value="UniProtKB-UniPathway"/>
</dbReference>
<dbReference type="GO" id="GO:0036211">
    <property type="term" value="P:protein modification process"/>
    <property type="evidence" value="ECO:0000304"/>
    <property type="project" value="ProtInc"/>
</dbReference>
<dbReference type="GO" id="GO:0006622">
    <property type="term" value="P:protein targeting to lysosome"/>
    <property type="evidence" value="ECO:0000304"/>
    <property type="project" value="ProtInc"/>
</dbReference>
<dbReference type="GO" id="GO:0033299">
    <property type="term" value="P:secretion of lysosomal enzymes"/>
    <property type="evidence" value="ECO:0000318"/>
    <property type="project" value="GO_Central"/>
</dbReference>
<dbReference type="FunFam" id="2.170.300.10:FF:000024">
    <property type="entry name" value="N-acetylglucosamine-1-phosphodiester alpha-N-acetylglucosaminidase"/>
    <property type="match status" value="1"/>
</dbReference>
<dbReference type="Gene3D" id="2.170.300.10">
    <property type="entry name" value="Tie2 ligand-binding domain superfamily"/>
    <property type="match status" value="1"/>
</dbReference>
<dbReference type="InterPro" id="IPR000742">
    <property type="entry name" value="EGF-like_dom"/>
</dbReference>
<dbReference type="InterPro" id="IPR018711">
    <property type="entry name" value="NAGPA"/>
</dbReference>
<dbReference type="PANTHER" id="PTHR40446">
    <property type="entry name" value="N-ACETYLGLUCOSAMINE-1-PHOSPHODIESTER ALPHA-N-ACETYLGLUCOSAMINIDASE"/>
    <property type="match status" value="1"/>
</dbReference>
<dbReference type="PANTHER" id="PTHR40446:SF2">
    <property type="entry name" value="N-ACETYLGLUCOSAMINE-1-PHOSPHODIESTER ALPHA-N-ACETYLGLUCOSAMINIDASE"/>
    <property type="match status" value="1"/>
</dbReference>
<dbReference type="Pfam" id="PF09992">
    <property type="entry name" value="NAGPA"/>
    <property type="match status" value="1"/>
</dbReference>
<dbReference type="PROSITE" id="PS00022">
    <property type="entry name" value="EGF_1"/>
    <property type="match status" value="1"/>
</dbReference>
<dbReference type="PROSITE" id="PS01186">
    <property type="entry name" value="EGF_2"/>
    <property type="match status" value="1"/>
</dbReference>
<dbReference type="PROSITE" id="PS50026">
    <property type="entry name" value="EGF_3"/>
    <property type="match status" value="1"/>
</dbReference>
<sequence length="515" mass="56073">MATSTGRWLLLRLALFGFLWEASGGLDSGASRDDDLLLPYPRARARLPRDCTRVRAGNREHESWPPPPATPGAGGLAVRTFVSHFRDRAVAGHLTRAVEPLRTFSVLEPGGPGGCAARRRATVEETARAADCRVAQNGGFFRMNSGECLGNVVSDERRVSSSGGLQNAQFGIRRDGTLVTGYLSEEEVLDTENPFVQLLSGVVWLIRNGSIYINESQATECDETQETGSFSKFVNVISARTAIGHDRKGQLVLFHADGQTEQRGINLWEMAEFLLKQDVVNAINLDGGGSATFVLNGTLASYPSDHCQDNMWRCPRQVSTVVCVHEPRCQPPDCHGHGTCVDGHCQCTGHFWRGPGCDELDCGPSNCSQHGLCTETGCRCDAGWTGSNCSEECPLGWHGPGCQRPCKCEHHCPCDPKTGNCSVSRVKQCLQPPEATLRAGELSFFTRTAWLALTLALAFLLLISTAANLSLLLSRAERNRRLHGDYAYHPLQEMNGEPLAAEKEQPGGAHNPFKD</sequence>
<protein>
    <recommendedName>
        <fullName>N-acetylglucosamine-1-phosphodiester alpha-N-acetylglucosaminidase</fullName>
        <ecNumber>3.1.4.45</ecNumber>
    </recommendedName>
    <alternativeName>
        <fullName>Mannose 6-phosphate-uncovering enzyme</fullName>
    </alternativeName>
    <alternativeName>
        <fullName>Phosphodiester alpha-GlcNAcase</fullName>
    </alternativeName>
</protein>
<name>NAGPA_HUMAN</name>
<feature type="signal peptide" evidence="5">
    <location>
        <begin position="1"/>
        <end position="25"/>
    </location>
</feature>
<feature type="propeptide" id="PRO_0000424659" description="Removed in mature form">
    <location>
        <begin position="26"/>
        <end position="49"/>
    </location>
</feature>
<feature type="chain" id="PRO_0000021788" description="N-acetylglucosamine-1-phosphodiester alpha-N-acetylglucosaminidase">
    <location>
        <begin position="50"/>
        <end position="515"/>
    </location>
</feature>
<feature type="topological domain" description="Lumenal" evidence="2">
    <location>
        <begin position="50"/>
        <end position="448"/>
    </location>
</feature>
<feature type="transmembrane region" description="Helical" evidence="2">
    <location>
        <begin position="449"/>
        <end position="469"/>
    </location>
</feature>
<feature type="topological domain" description="Cytoplasmic" evidence="2">
    <location>
        <begin position="470"/>
        <end position="515"/>
    </location>
</feature>
<feature type="domain" description="EGF-like" evidence="3">
    <location>
        <begin position="358"/>
        <end position="390"/>
    </location>
</feature>
<feature type="region of interest" description="Mediates the interaction with AP4M1" evidence="8">
    <location>
        <begin position="486"/>
        <end position="493"/>
    </location>
</feature>
<feature type="short sequence motif" description="Tyrosine-based internalization motif">
    <location>
        <begin position="488"/>
        <end position="491"/>
    </location>
</feature>
<feature type="short sequence motif" description="NPF internalization motif">
    <location>
        <begin position="511"/>
        <end position="515"/>
    </location>
</feature>
<feature type="glycosylation site" description="N-linked (GlcNAc...) asparagine" evidence="2">
    <location>
        <position position="208"/>
    </location>
</feature>
<feature type="glycosylation site" description="N-linked (GlcNAc...) asparagine" evidence="2">
    <location>
        <position position="214"/>
    </location>
</feature>
<feature type="glycosylation site" description="N-linked (GlcNAc...) asparagine" evidence="2">
    <location>
        <position position="296"/>
    </location>
</feature>
<feature type="glycosylation site" description="N-linked (GlcNAc...) asparagine" evidence="2">
    <location>
        <position position="366"/>
    </location>
</feature>
<feature type="glycosylation site" description="N-linked (GlcNAc...) asparagine" evidence="2">
    <location>
        <position position="388"/>
    </location>
</feature>
<feature type="glycosylation site" description="N-linked (GlcNAc...) asparagine" evidence="2">
    <location>
        <position position="420"/>
    </location>
</feature>
<feature type="disulfide bond" evidence="12">
    <location>
        <begin position="115"/>
        <end position="148"/>
    </location>
</feature>
<feature type="disulfide bond" evidence="3 7">
    <location>
        <begin position="132"/>
        <end position="323"/>
    </location>
</feature>
<feature type="disulfide bond" evidence="12">
    <location>
        <begin position="307"/>
        <end position="314"/>
    </location>
</feature>
<feature type="disulfide bond" evidence="3">
    <location>
        <begin position="362"/>
        <end position="373"/>
    </location>
</feature>
<feature type="disulfide bond" evidence="3">
    <location>
        <begin position="380"/>
        <end position="389"/>
    </location>
</feature>
<feature type="splice variant" id="VSP_012267" description="In isoform 3." evidence="10">
    <original>CQD</original>
    <variation>WQA</variation>
    <location>
        <begin position="307"/>
        <end position="309"/>
    </location>
</feature>
<feature type="splice variant" id="VSP_012268" description="In isoform 3." evidence="10">
    <location>
        <begin position="310"/>
        <end position="515"/>
    </location>
</feature>
<feature type="splice variant" id="VSP_012269" description="In isoform 2." evidence="9">
    <location>
        <begin position="392"/>
        <end position="425"/>
    </location>
</feature>
<feature type="sequence variant" id="VAR_073225" description="Rare variant; found in individuals suffering from stuttering; uncertain significance; dbSNP:rs755458782." evidence="6">
    <original>H</original>
    <variation>Q</variation>
    <location>
        <position position="84"/>
    </location>
</feature>
<feature type="sequence variant" id="VAR_073226" description="Rare variant; found in individuals suffering from stuttering; uncertain significance; dbSNP:rs139526942." evidence="6">
    <original>R</original>
    <variation>C</variation>
    <location>
        <position position="328"/>
    </location>
</feature>
<feature type="sequence variant" id="VAR_020609" description="In dbSNP:rs7188856." evidence="4">
    <original>T</original>
    <variation>I</variation>
    <location>
        <position position="465"/>
    </location>
</feature>
<feature type="mutagenesis site" description="65% of wild-type of activity." evidence="7">
    <original>C</original>
    <variation>M</variation>
    <location>
        <position position="51"/>
    </location>
</feature>
<feature type="mutagenesis site" description="15% of wild-type of activity, and almost no traffic to Golgi." evidence="7">
    <original>C</original>
    <variation>S</variation>
    <location>
        <position position="115"/>
    </location>
</feature>
<feature type="mutagenesis site" description="No traffic to Golgi." evidence="7">
    <original>C</original>
    <variation>V</variation>
    <location>
        <position position="132"/>
    </location>
</feature>
<feature type="mutagenesis site" description="11% of wild-type of activity." evidence="7">
    <original>N</original>
    <variation>A</variation>
    <location>
        <position position="137"/>
    </location>
</feature>
<feature type="mutagenesis site" description="10% of wild-type of activity; when associated with M-51." evidence="7">
    <original>C</original>
    <variation>L</variation>
    <location>
        <position position="221"/>
    </location>
</feature>
<feature type="mutagenesis site" description="6% of wild-type of activity." evidence="7">
    <original>Q</original>
    <variation>H</variation>
    <location>
        <position position="225"/>
    </location>
</feature>
<feature type="mutagenesis site" description="Complete loss of activity." evidence="7">
    <original>T</original>
    <variation>R</variation>
    <location>
        <position position="227"/>
    </location>
</feature>
<feature type="mutagenesis site" description="87% of wild-type of activity." evidence="7">
    <original>R</original>
    <variation>A</variation>
    <location>
        <position position="247"/>
    </location>
</feature>
<feature type="mutagenesis site" description="22% of wild-type of activity." evidence="7">
    <original>N</original>
    <variation>A</variation>
    <location>
        <position position="284"/>
    </location>
</feature>
<feature type="mutagenesis site" description="Complete loss of activity." evidence="7">
    <original>D</original>
    <variation>A</variation>
    <location>
        <position position="286"/>
    </location>
</feature>
<feature type="mutagenesis site" description="16% of wild-type of activity." evidence="7">
    <original>G</original>
    <variation>A</variation>
    <location>
        <position position="287"/>
    </location>
</feature>
<feature type="mutagenesis site" description="Complete loss of activity." evidence="7">
    <original>G</original>
    <variation>A</variation>
    <location>
        <position position="288"/>
    </location>
</feature>
<feature type="mutagenesis site" description="Complete loss of activity." evidence="7">
    <original>G</original>
    <variation>A</variation>
    <location>
        <position position="289"/>
    </location>
</feature>
<feature type="mutagenesis site" description="Complete loss of activity." evidence="7">
    <original>S</original>
    <variation>A</variation>
    <location>
        <position position="290"/>
    </location>
</feature>
<feature type="mutagenesis site" description="43% of wild-type of activity." evidence="7">
    <original>T</original>
    <variation>A</variation>
    <location>
        <position position="320"/>
    </location>
</feature>
<feature type="mutagenesis site" description="67% of wild-type of activity." evidence="7">
    <original>V</original>
    <variation>A</variation>
    <location>
        <position position="322"/>
    </location>
</feature>
<feature type="mutagenesis site" description="Interaction with AP4M1 is abolished." evidence="8">
    <original>Y</original>
    <variation>A</variation>
    <location>
        <position position="486"/>
    </location>
</feature>
<feature type="mutagenesis site" description="Interaction with AP4M1 is abolished." evidence="8">
    <original>Y</original>
    <variation>A</variation>
    <location>
        <position position="488"/>
    </location>
</feature>
<feature type="mutagenesis site" description="Interaction with AP4M1 is abolished." evidence="8">
    <original>L</original>
    <variation>A</variation>
    <location>
        <position position="491"/>
    </location>
</feature>
<feature type="sequence conflict" description="In Ref. 1; AAF08273." evidence="11" ref="1">
    <original>Q</original>
    <variation>H</variation>
    <location>
        <position position="259"/>
    </location>
</feature>
<feature type="sequence conflict" description="In Ref. 1; AAF08273." evidence="11" ref="1">
    <original>P</original>
    <variation>R</variation>
    <location>
        <position position="405"/>
    </location>
</feature>
<organism>
    <name type="scientific">Homo sapiens</name>
    <name type="common">Human</name>
    <dbReference type="NCBI Taxonomy" id="9606"/>
    <lineage>
        <taxon>Eukaryota</taxon>
        <taxon>Metazoa</taxon>
        <taxon>Chordata</taxon>
        <taxon>Craniata</taxon>
        <taxon>Vertebrata</taxon>
        <taxon>Euteleostomi</taxon>
        <taxon>Mammalia</taxon>
        <taxon>Eutheria</taxon>
        <taxon>Euarchontoglires</taxon>
        <taxon>Primates</taxon>
        <taxon>Haplorrhini</taxon>
        <taxon>Catarrhini</taxon>
        <taxon>Hominidae</taxon>
        <taxon>Homo</taxon>
    </lineage>
</organism>
<reference key="1">
    <citation type="journal article" date="1999" name="J. Biol. Chem.">
        <title>Molecular cloning and functional expression of two splice forms of human N-acetylglucosamine-1-phosphodiester alpha-N-acetylglucosaminidase.</title>
        <authorList>
            <person name="Kornfeld R.H."/>
            <person name="Bao M."/>
            <person name="Brewer K."/>
            <person name="Noll C."/>
            <person name="Canfield W.M."/>
        </authorList>
    </citation>
    <scope>NUCLEOTIDE SEQUENCE [MRNA] (ISOFORMS 1 AND 2)</scope>
    <scope>VARIANT ILE-465</scope>
</reference>
<reference key="2">
    <citation type="journal article" date="2004" name="Nat. Genet.">
        <title>Complete sequencing and characterization of 21,243 full-length human cDNAs.</title>
        <authorList>
            <person name="Ota T."/>
            <person name="Suzuki Y."/>
            <person name="Nishikawa T."/>
            <person name="Otsuki T."/>
            <person name="Sugiyama T."/>
            <person name="Irie R."/>
            <person name="Wakamatsu A."/>
            <person name="Hayashi K."/>
            <person name="Sato H."/>
            <person name="Nagai K."/>
            <person name="Kimura K."/>
            <person name="Makita H."/>
            <person name="Sekine M."/>
            <person name="Obayashi M."/>
            <person name="Nishi T."/>
            <person name="Shibahara T."/>
            <person name="Tanaka T."/>
            <person name="Ishii S."/>
            <person name="Yamamoto J."/>
            <person name="Saito K."/>
            <person name="Kawai Y."/>
            <person name="Isono Y."/>
            <person name="Nakamura Y."/>
            <person name="Nagahari K."/>
            <person name="Murakami K."/>
            <person name="Yasuda T."/>
            <person name="Iwayanagi T."/>
            <person name="Wagatsuma M."/>
            <person name="Shiratori A."/>
            <person name="Sudo H."/>
            <person name="Hosoiri T."/>
            <person name="Kaku Y."/>
            <person name="Kodaira H."/>
            <person name="Kondo H."/>
            <person name="Sugawara M."/>
            <person name="Takahashi M."/>
            <person name="Kanda K."/>
            <person name="Yokoi T."/>
            <person name="Furuya T."/>
            <person name="Kikkawa E."/>
            <person name="Omura Y."/>
            <person name="Abe K."/>
            <person name="Kamihara K."/>
            <person name="Katsuta N."/>
            <person name="Sato K."/>
            <person name="Tanikawa M."/>
            <person name="Yamazaki M."/>
            <person name="Ninomiya K."/>
            <person name="Ishibashi T."/>
            <person name="Yamashita H."/>
            <person name="Murakawa K."/>
            <person name="Fujimori K."/>
            <person name="Tanai H."/>
            <person name="Kimata M."/>
            <person name="Watanabe M."/>
            <person name="Hiraoka S."/>
            <person name="Chiba Y."/>
            <person name="Ishida S."/>
            <person name="Ono Y."/>
            <person name="Takiguchi S."/>
            <person name="Watanabe S."/>
            <person name="Yosida M."/>
            <person name="Hotuta T."/>
            <person name="Kusano J."/>
            <person name="Kanehori K."/>
            <person name="Takahashi-Fujii A."/>
            <person name="Hara H."/>
            <person name="Tanase T.-O."/>
            <person name="Nomura Y."/>
            <person name="Togiya S."/>
            <person name="Komai F."/>
            <person name="Hara R."/>
            <person name="Takeuchi K."/>
            <person name="Arita M."/>
            <person name="Imose N."/>
            <person name="Musashino K."/>
            <person name="Yuuki H."/>
            <person name="Oshima A."/>
            <person name="Sasaki N."/>
            <person name="Aotsuka S."/>
            <person name="Yoshikawa Y."/>
            <person name="Matsunawa H."/>
            <person name="Ichihara T."/>
            <person name="Shiohata N."/>
            <person name="Sano S."/>
            <person name="Moriya S."/>
            <person name="Momiyama H."/>
            <person name="Satoh N."/>
            <person name="Takami S."/>
            <person name="Terashima Y."/>
            <person name="Suzuki O."/>
            <person name="Nakagawa S."/>
            <person name="Senoh A."/>
            <person name="Mizoguchi H."/>
            <person name="Goto Y."/>
            <person name="Shimizu F."/>
            <person name="Wakebe H."/>
            <person name="Hishigaki H."/>
            <person name="Watanabe T."/>
            <person name="Sugiyama A."/>
            <person name="Takemoto M."/>
            <person name="Kawakami B."/>
            <person name="Yamazaki M."/>
            <person name="Watanabe K."/>
            <person name="Kumagai A."/>
            <person name="Itakura S."/>
            <person name="Fukuzumi Y."/>
            <person name="Fujimori Y."/>
            <person name="Komiyama M."/>
            <person name="Tashiro H."/>
            <person name="Tanigami A."/>
            <person name="Fujiwara T."/>
            <person name="Ono T."/>
            <person name="Yamada K."/>
            <person name="Fujii Y."/>
            <person name="Ozaki K."/>
            <person name="Hirao M."/>
            <person name="Ohmori Y."/>
            <person name="Kawabata A."/>
            <person name="Hikiji T."/>
            <person name="Kobatake N."/>
            <person name="Inagaki H."/>
            <person name="Ikema Y."/>
            <person name="Okamoto S."/>
            <person name="Okitani R."/>
            <person name="Kawakami T."/>
            <person name="Noguchi S."/>
            <person name="Itoh T."/>
            <person name="Shigeta K."/>
            <person name="Senba T."/>
            <person name="Matsumura K."/>
            <person name="Nakajima Y."/>
            <person name="Mizuno T."/>
            <person name="Morinaga M."/>
            <person name="Sasaki M."/>
            <person name="Togashi T."/>
            <person name="Oyama M."/>
            <person name="Hata H."/>
            <person name="Watanabe M."/>
            <person name="Komatsu T."/>
            <person name="Mizushima-Sugano J."/>
            <person name="Satoh T."/>
            <person name="Shirai Y."/>
            <person name="Takahashi Y."/>
            <person name="Nakagawa K."/>
            <person name="Okumura K."/>
            <person name="Nagase T."/>
            <person name="Nomura N."/>
            <person name="Kikuchi H."/>
            <person name="Masuho Y."/>
            <person name="Yamashita R."/>
            <person name="Nakai K."/>
            <person name="Yada T."/>
            <person name="Nakamura Y."/>
            <person name="Ohara O."/>
            <person name="Isogai T."/>
            <person name="Sugano S."/>
        </authorList>
    </citation>
    <scope>NUCLEOTIDE SEQUENCE [LARGE SCALE MRNA] (ISOFORM 1)</scope>
    <source>
        <tissue>Mammary gland</tissue>
        <tissue>Tongue</tissue>
    </source>
</reference>
<reference key="3">
    <citation type="journal article" date="2004" name="Nature">
        <title>The sequence and analysis of duplication-rich human chromosome 16.</title>
        <authorList>
            <person name="Martin J."/>
            <person name="Han C."/>
            <person name="Gordon L.A."/>
            <person name="Terry A."/>
            <person name="Prabhakar S."/>
            <person name="She X."/>
            <person name="Xie G."/>
            <person name="Hellsten U."/>
            <person name="Chan Y.M."/>
            <person name="Altherr M."/>
            <person name="Couronne O."/>
            <person name="Aerts A."/>
            <person name="Bajorek E."/>
            <person name="Black S."/>
            <person name="Blumer H."/>
            <person name="Branscomb E."/>
            <person name="Brown N.C."/>
            <person name="Bruno W.J."/>
            <person name="Buckingham J.M."/>
            <person name="Callen D.F."/>
            <person name="Campbell C.S."/>
            <person name="Campbell M.L."/>
            <person name="Campbell E.W."/>
            <person name="Caoile C."/>
            <person name="Challacombe J.F."/>
            <person name="Chasteen L.A."/>
            <person name="Chertkov O."/>
            <person name="Chi H.C."/>
            <person name="Christensen M."/>
            <person name="Clark L.M."/>
            <person name="Cohn J.D."/>
            <person name="Denys M."/>
            <person name="Detter J.C."/>
            <person name="Dickson M."/>
            <person name="Dimitrijevic-Bussod M."/>
            <person name="Escobar J."/>
            <person name="Fawcett J.J."/>
            <person name="Flowers D."/>
            <person name="Fotopulos D."/>
            <person name="Glavina T."/>
            <person name="Gomez M."/>
            <person name="Gonzales E."/>
            <person name="Goodstein D."/>
            <person name="Goodwin L.A."/>
            <person name="Grady D.L."/>
            <person name="Grigoriev I."/>
            <person name="Groza M."/>
            <person name="Hammon N."/>
            <person name="Hawkins T."/>
            <person name="Haydu L."/>
            <person name="Hildebrand C.E."/>
            <person name="Huang W."/>
            <person name="Israni S."/>
            <person name="Jett J."/>
            <person name="Jewett P.B."/>
            <person name="Kadner K."/>
            <person name="Kimball H."/>
            <person name="Kobayashi A."/>
            <person name="Krawczyk M.-C."/>
            <person name="Leyba T."/>
            <person name="Longmire J.L."/>
            <person name="Lopez F."/>
            <person name="Lou Y."/>
            <person name="Lowry S."/>
            <person name="Ludeman T."/>
            <person name="Manohar C.F."/>
            <person name="Mark G.A."/>
            <person name="McMurray K.L."/>
            <person name="Meincke L.J."/>
            <person name="Morgan J."/>
            <person name="Moyzis R.K."/>
            <person name="Mundt M.O."/>
            <person name="Munk A.C."/>
            <person name="Nandkeshwar R.D."/>
            <person name="Pitluck S."/>
            <person name="Pollard M."/>
            <person name="Predki P."/>
            <person name="Parson-Quintana B."/>
            <person name="Ramirez L."/>
            <person name="Rash S."/>
            <person name="Retterer J."/>
            <person name="Ricke D.O."/>
            <person name="Robinson D.L."/>
            <person name="Rodriguez A."/>
            <person name="Salamov A."/>
            <person name="Saunders E.H."/>
            <person name="Scott D."/>
            <person name="Shough T."/>
            <person name="Stallings R.L."/>
            <person name="Stalvey M."/>
            <person name="Sutherland R.D."/>
            <person name="Tapia R."/>
            <person name="Tesmer J.G."/>
            <person name="Thayer N."/>
            <person name="Thompson L.S."/>
            <person name="Tice H."/>
            <person name="Torney D.C."/>
            <person name="Tran-Gyamfi M."/>
            <person name="Tsai M."/>
            <person name="Ulanovsky L.E."/>
            <person name="Ustaszewska A."/>
            <person name="Vo N."/>
            <person name="White P.S."/>
            <person name="Williams A.L."/>
            <person name="Wills P.L."/>
            <person name="Wu J.-R."/>
            <person name="Wu K."/>
            <person name="Yang J."/>
            <person name="DeJong P."/>
            <person name="Bruce D."/>
            <person name="Doggett N.A."/>
            <person name="Deaven L."/>
            <person name="Schmutz J."/>
            <person name="Grimwood J."/>
            <person name="Richardson P."/>
            <person name="Rokhsar D.S."/>
            <person name="Eichler E.E."/>
            <person name="Gilna P."/>
            <person name="Lucas S.M."/>
            <person name="Myers R.M."/>
            <person name="Rubin E.M."/>
            <person name="Pennacchio L.A."/>
        </authorList>
    </citation>
    <scope>NUCLEOTIDE SEQUENCE [LARGE SCALE GENOMIC DNA]</scope>
</reference>
<reference key="4">
    <citation type="submission" date="2005-09" db="EMBL/GenBank/DDBJ databases">
        <authorList>
            <person name="Mural R.J."/>
            <person name="Istrail S."/>
            <person name="Sutton G.G."/>
            <person name="Florea L."/>
            <person name="Halpern A.L."/>
            <person name="Mobarry C.M."/>
            <person name="Lippert R."/>
            <person name="Walenz B."/>
            <person name="Shatkay H."/>
            <person name="Dew I."/>
            <person name="Miller J.R."/>
            <person name="Flanigan M.J."/>
            <person name="Edwards N.J."/>
            <person name="Bolanos R."/>
            <person name="Fasulo D."/>
            <person name="Halldorsson B.V."/>
            <person name="Hannenhalli S."/>
            <person name="Turner R."/>
            <person name="Yooseph S."/>
            <person name="Lu F."/>
            <person name="Nusskern D.R."/>
            <person name="Shue B.C."/>
            <person name="Zheng X.H."/>
            <person name="Zhong F."/>
            <person name="Delcher A.L."/>
            <person name="Huson D.H."/>
            <person name="Kravitz S.A."/>
            <person name="Mouchard L."/>
            <person name="Reinert K."/>
            <person name="Remington K.A."/>
            <person name="Clark A.G."/>
            <person name="Waterman M.S."/>
            <person name="Eichler E.E."/>
            <person name="Adams M.D."/>
            <person name="Hunkapiller M.W."/>
            <person name="Myers E.W."/>
            <person name="Venter J.C."/>
        </authorList>
    </citation>
    <scope>NUCLEOTIDE SEQUENCE [LARGE SCALE GENOMIC DNA]</scope>
</reference>
<reference key="5">
    <citation type="journal article" date="2004" name="Genome Res.">
        <title>The status, quality, and expansion of the NIH full-length cDNA project: the Mammalian Gene Collection (MGC).</title>
        <authorList>
            <consortium name="The MGC Project Team"/>
        </authorList>
    </citation>
    <scope>NUCLEOTIDE SEQUENCE [LARGE SCALE MRNA] (ISOFORM 3)</scope>
    <source>
        <tissue>Colon</tissue>
    </source>
</reference>
<reference key="6">
    <citation type="journal article" date="2002" name="J. Biol. Chem.">
        <title>Human mannose 6-phosphate-uncovering enzyme is synthesized as a proenzyme that is activated by the endoprotease furin.</title>
        <authorList>
            <person name="Do H."/>
            <person name="Lee W.S."/>
            <person name="Ghosh P."/>
            <person name="Hollowell T."/>
            <person name="Canfield W."/>
            <person name="Kornfeld S."/>
        </authorList>
    </citation>
    <scope>PROTEIN SEQUENCE OF 26-36</scope>
    <scope>SIGNAL SEQUENCE CLEAVAGE SITE</scope>
    <scope>PROTEOLYTIC PROCESSING</scope>
    <scope>SUBCELLULAR LOCATION</scope>
</reference>
<reference key="7">
    <citation type="journal article" date="2010" name="N. Engl. J. Med.">
        <title>Mutations in the lysosomal enzyme-targeting pathway and persistent stuttering.</title>
        <authorList>
            <person name="Kang C."/>
            <person name="Riazuddin S."/>
            <person name="Mundorff J."/>
            <person name="Krasnewich D."/>
            <person name="Friedman P."/>
            <person name="Mullikin J.C."/>
            <person name="Drayna D."/>
        </authorList>
    </citation>
    <scope>POSSIBLE INVOLVEMENT IN PERSISTENT STUTTERING</scope>
    <scope>VARIANTS GLN-84 AND CYS-328</scope>
</reference>
<reference key="8">
    <citation type="journal article" date="2013" name="J. Biol. Chem.">
        <title>Structure and function of the DUF2233 domain in bacteria and in the human mannose 6-phosphate uncovering enzyme.</title>
        <authorList>
            <person name="Das D."/>
            <person name="Lee W.S."/>
            <person name="Grant J.C."/>
            <person name="Chiu H.J."/>
            <person name="Farr C.L."/>
            <person name="Vance J."/>
            <person name="Klock H.E."/>
            <person name="Knuth M.W."/>
            <person name="Miller M.D."/>
            <person name="Elsliger M.A."/>
            <person name="Deacon A.M."/>
            <person name="Godzik A."/>
            <person name="Lesley S.A."/>
            <person name="Kornfeld S."/>
            <person name="Wilson I.A."/>
        </authorList>
    </citation>
    <scope>MUTAGENESIS OF CYS-51; CYS-115; CYS-132; ASN-137; CYS-221; GLN-225; THR-227; ARG-247; ASN-284; ASP-286; GLY-287; GLY-288; GLY-289; SER-290; THR-320 AND VAL-322</scope>
    <scope>3D-STRUCTURE MODELING</scope>
    <scope>DISULFIDE BONDS</scope>
    <scope>FUNCTION</scope>
</reference>
<reference key="9">
    <citation type="journal article" date="2015" name="Am. J. Hum. Genet.">
        <title>Association between rare variants in AP4E1, a component of intracellular trafficking, and persistent stuttering.</title>
        <authorList>
            <person name="Raza M.H."/>
            <person name="Mattera R."/>
            <person name="Morell R."/>
            <person name="Sainz E."/>
            <person name="Rahn R."/>
            <person name="Gutierrez J."/>
            <person name="Paris E."/>
            <person name="Root J."/>
            <person name="Solomon B."/>
            <person name="Brewer C."/>
            <person name="Basra M.A."/>
            <person name="Khan S."/>
            <person name="Riazuddin S."/>
            <person name="Braun A."/>
            <person name="Bonifacino J.S."/>
            <person name="Drayna D."/>
        </authorList>
    </citation>
    <scope>INTERACTION WITH AP4M1</scope>
    <scope>MUTAGENESIS OF TYR-486; TYR-488 AND LEU-491</scope>
</reference>
<reference key="10">
    <citation type="journal article" date="2015" name="Proteomics">
        <title>N-terminome analysis of the human mitochondrial proteome.</title>
        <authorList>
            <person name="Vaca Jacome A.S."/>
            <person name="Rabilloud T."/>
            <person name="Schaeffer-Reiss C."/>
            <person name="Rompais M."/>
            <person name="Ayoub D."/>
            <person name="Lane L."/>
            <person name="Bairoch A."/>
            <person name="Van Dorsselaer A."/>
            <person name="Carapito C."/>
        </authorList>
    </citation>
    <scope>IDENTIFICATION BY MASS SPECTROMETRY [LARGE SCALE ANALYSIS]</scope>
</reference>